<sequence length="540" mass="60273">MRTDDPVIGNDGDAPRYKNLMLKPGTQMRGMFEKIPFPLDFKLYLFHVTNPDVVMKGGKPRVREIGPYFFEEWKEKYDTVDNEEDDTLTFTLKNTWIFRPDLSKPLTGDEMITIPHPLILGALLMVQRDREAMMPLVSKGMDIIMNPLTTGFLTTRVMDLLFDGILIDCSSHEFSAKALCSGLESEGAVMPFNETHFKFSMFGLKNGTDAGRWVVYRGVKNIMDLGRVVSFNDETEMDIYDGDECNRYIGTDSTIFPPFLTTKDKLWAWSPEICRSIGAEYGGKSKYAGLPMSFFKLDFGDARNEPEHHCFCRDPPDICPPKGTIDLAPCLGAPIIGSKPHFYDSDPKLLAAVDGLTPNEKDHDVYIHFQLLSGTPVSAAKRLMFSMEIEPIRDHAVLGNLPTVILPLFWAEEGASLNKTWTNQLKYTLFLGLRFNTAVKWLTIIIGTIGTIVGGFMHYKRTTKMVNVTPVQSVNGSSAKGKGAGMTVVGHQPDSKGGSVTAPVIPSAKDLLQNSRNLPTVIEGLDKPQKVTVTEMQERY</sequence>
<proteinExistence type="evidence at transcript level"/>
<gene>
    <name evidence="5 7" type="primary">snmp1</name>
    <name type="synonym">SCRB1</name>
    <name type="ORF">AAEL005374</name>
</gene>
<protein>
    <recommendedName>
        <fullName evidence="5 8">Sensory neuron membrane protein 1</fullName>
        <shortName evidence="5">SNMP1Aaeg</shortName>
    </recommendedName>
    <alternativeName>
        <fullName>Scavenger receptor class B</fullName>
    </alternativeName>
</protein>
<accession>Q17A88</accession>
<accession>A9LME1</accession>
<feature type="chain" id="PRO_0000408230" description="Sensory neuron membrane protein 1">
    <location>
        <begin position="1"/>
        <end position="540"/>
    </location>
</feature>
<feature type="topological domain" description="Cytoplasmic" evidence="4">
    <location>
        <begin position="1"/>
        <end position="105"/>
    </location>
</feature>
<feature type="transmembrane region" description="Helical" evidence="4">
    <location>
        <begin position="106"/>
        <end position="126"/>
    </location>
</feature>
<feature type="topological domain" description="Extracellular" evidence="4">
    <location>
        <begin position="127"/>
        <end position="436"/>
    </location>
</feature>
<feature type="transmembrane region" description="Helical" evidence="4">
    <location>
        <begin position="437"/>
        <end position="457"/>
    </location>
</feature>
<feature type="topological domain" description="Cytoplasmic" evidence="4">
    <location>
        <begin position="458"/>
        <end position="540"/>
    </location>
</feature>
<feature type="glycosylation site" description="N-linked (GlcNAc...) asparagine" evidence="4">
    <location>
        <position position="193"/>
    </location>
</feature>
<feature type="glycosylation site" description="N-linked (GlcNAc...) asparagine" evidence="4">
    <location>
        <position position="206"/>
    </location>
</feature>
<feature type="glycosylation site" description="N-linked (GlcNAc...) asparagine" evidence="4">
    <location>
        <position position="418"/>
    </location>
</feature>
<feature type="disulfide bond" evidence="1">
    <location>
        <begin position="245"/>
        <end position="310"/>
    </location>
</feature>
<feature type="disulfide bond" evidence="1">
    <location>
        <begin position="274"/>
        <end position="330"/>
    </location>
</feature>
<feature type="disulfide bond" evidence="1">
    <location>
        <begin position="312"/>
        <end position="319"/>
    </location>
</feature>
<feature type="splice variant" id="VSP_047714" description="In isoform 2." evidence="5">
    <original>MRTDDPVIGNDGDAPRY</original>
    <variation>MLIKNR</variation>
    <location>
        <begin position="1"/>
        <end position="17"/>
    </location>
</feature>
<feature type="sequence conflict" description="In Ref. 1; ABX10906." evidence="6" ref="1">
    <original>R</original>
    <variation>H</variation>
    <location>
        <position position="61"/>
    </location>
</feature>
<feature type="sequence conflict" description="In Ref. 1; ABX10906." evidence="6" ref="1">
    <original>S</original>
    <variation>T</variation>
    <location>
        <position position="103"/>
    </location>
</feature>
<feature type="sequence conflict" description="In Ref. 1; ABX10906." evidence="6" ref="1">
    <original>H</original>
    <variation>Q</variation>
    <location>
        <position position="172"/>
    </location>
</feature>
<feature type="sequence conflict" description="In Ref. 1; ABX10906." evidence="6" ref="1">
    <original>M</original>
    <variation>T</variation>
    <location>
        <position position="465"/>
    </location>
</feature>
<feature type="sequence conflict" description="In Ref. 1; ABX10906." evidence="6" ref="1">
    <original>K</original>
    <variation>N</variation>
    <location>
        <position position="482"/>
    </location>
</feature>
<feature type="sequence conflict" description="In Ref. 1; ABX10906." evidence="6" ref="1">
    <original>A</original>
    <variation>T</variation>
    <location>
        <position position="502"/>
    </location>
</feature>
<feature type="sequence conflict" description="In Ref. 1; ABX10906." evidence="6" ref="1">
    <original>K</original>
    <variation>R</variation>
    <location>
        <position position="527"/>
    </location>
</feature>
<comment type="function">
    <text evidence="3">Plays an olfactory role that is not restricted to pheromone sensitivity.</text>
</comment>
<comment type="subcellular location">
    <subcellularLocation>
        <location evidence="2">Cell membrane</location>
        <topology evidence="2">Multi-pass membrane protein</topology>
    </subcellularLocation>
</comment>
<comment type="alternative products">
    <event type="alternative splicing"/>
    <isoform>
        <id>Q17A88-1</id>
        <name>1</name>
        <sequence type="displayed"/>
    </isoform>
    <isoform>
        <id>Q17A88-2</id>
        <name>2</name>
        <sequence type="described" ref="VSP_047714"/>
    </isoform>
</comment>
<comment type="similarity">
    <text evidence="6">Belongs to the CD36 family.</text>
</comment>
<name>SNMP1_AEDAE</name>
<reference evidence="8" key="1">
    <citation type="journal article" date="2009" name="Insect Biochem. Mol. Biol.">
        <title>The insect SNMP gene family.</title>
        <authorList>
            <person name="Vogt R.G."/>
            <person name="Miller N.E."/>
            <person name="Litvack R."/>
            <person name="Fandino R.A."/>
            <person name="Sparks J."/>
            <person name="Staples J."/>
            <person name="Friedman R."/>
            <person name="Dickens J.C."/>
        </authorList>
    </citation>
    <scope>NUCLEOTIDE SEQUENCE [GENOMIC DNA / MRNA] (ISOFORM 2)</scope>
</reference>
<reference key="2">
    <citation type="journal article" date="2007" name="Science">
        <title>Genome sequence of Aedes aegypti, a major arbovirus vector.</title>
        <authorList>
            <person name="Nene V."/>
            <person name="Wortman J.R."/>
            <person name="Lawson D."/>
            <person name="Haas B.J."/>
            <person name="Kodira C.D."/>
            <person name="Tu Z.J."/>
            <person name="Loftus B.J."/>
            <person name="Xi Z."/>
            <person name="Megy K."/>
            <person name="Grabherr M."/>
            <person name="Ren Q."/>
            <person name="Zdobnov E.M."/>
            <person name="Lobo N.F."/>
            <person name="Campbell K.S."/>
            <person name="Brown S.E."/>
            <person name="Bonaldo M.F."/>
            <person name="Zhu J."/>
            <person name="Sinkins S.P."/>
            <person name="Hogenkamp D.G."/>
            <person name="Amedeo P."/>
            <person name="Arensburger P."/>
            <person name="Atkinson P.W."/>
            <person name="Bidwell S.L."/>
            <person name="Biedler J."/>
            <person name="Birney E."/>
            <person name="Bruggner R.V."/>
            <person name="Costas J."/>
            <person name="Coy M.R."/>
            <person name="Crabtree J."/>
            <person name="Crawford M."/>
            <person name="DeBruyn B."/>
            <person name="DeCaprio D."/>
            <person name="Eiglmeier K."/>
            <person name="Eisenstadt E."/>
            <person name="El-Dorry H."/>
            <person name="Gelbart W.M."/>
            <person name="Gomes S.L."/>
            <person name="Hammond M."/>
            <person name="Hannick L.I."/>
            <person name="Hogan J.R."/>
            <person name="Holmes M.H."/>
            <person name="Jaffe D."/>
            <person name="Johnston S.J."/>
            <person name="Kennedy R.C."/>
            <person name="Koo H."/>
            <person name="Kravitz S."/>
            <person name="Kriventseva E.V."/>
            <person name="Kulp D."/>
            <person name="Labutti K."/>
            <person name="Lee E."/>
            <person name="Li S."/>
            <person name="Lovin D.D."/>
            <person name="Mao C."/>
            <person name="Mauceli E."/>
            <person name="Menck C.F."/>
            <person name="Miller J.R."/>
            <person name="Montgomery P."/>
            <person name="Mori A."/>
            <person name="Nascimento A.L."/>
            <person name="Naveira H.F."/>
            <person name="Nusbaum C."/>
            <person name="O'Leary S.B."/>
            <person name="Orvis J."/>
            <person name="Pertea M."/>
            <person name="Quesneville H."/>
            <person name="Reidenbach K.R."/>
            <person name="Rogers Y.-H.C."/>
            <person name="Roth C.W."/>
            <person name="Schneider J.R."/>
            <person name="Schatz M."/>
            <person name="Shumway M."/>
            <person name="Stanke M."/>
            <person name="Stinson E.O."/>
            <person name="Tubio J.M.C."/>
            <person name="Vanzee J.P."/>
            <person name="Verjovski-Almeida S."/>
            <person name="Werner D."/>
            <person name="White O.R."/>
            <person name="Wyder S."/>
            <person name="Zeng Q."/>
            <person name="Zhao Q."/>
            <person name="Zhao Y."/>
            <person name="Hill C.A."/>
            <person name="Raikhel A.S."/>
            <person name="Soares M.B."/>
            <person name="Knudson D.L."/>
            <person name="Lee N.H."/>
            <person name="Galagan J."/>
            <person name="Salzberg S.L."/>
            <person name="Paulsen I.T."/>
            <person name="Dimopoulos G."/>
            <person name="Collins F.H."/>
            <person name="Bruce B."/>
            <person name="Fraser-Liggett C.M."/>
            <person name="Severson D.W."/>
        </authorList>
    </citation>
    <scope>NUCLEOTIDE SEQUENCE [LARGE SCALE GENOMIC DNA]</scope>
    <source>
        <strain>LVPib12</strain>
    </source>
</reference>
<organism>
    <name type="scientific">Aedes aegypti</name>
    <name type="common">Yellowfever mosquito</name>
    <name type="synonym">Culex aegypti</name>
    <dbReference type="NCBI Taxonomy" id="7159"/>
    <lineage>
        <taxon>Eukaryota</taxon>
        <taxon>Metazoa</taxon>
        <taxon>Ecdysozoa</taxon>
        <taxon>Arthropoda</taxon>
        <taxon>Hexapoda</taxon>
        <taxon>Insecta</taxon>
        <taxon>Pterygota</taxon>
        <taxon>Neoptera</taxon>
        <taxon>Endopterygota</taxon>
        <taxon>Diptera</taxon>
        <taxon>Nematocera</taxon>
        <taxon>Culicoidea</taxon>
        <taxon>Culicidae</taxon>
        <taxon>Culicinae</taxon>
        <taxon>Aedini</taxon>
        <taxon>Aedes</taxon>
        <taxon>Stegomyia</taxon>
    </lineage>
</organism>
<keyword id="KW-0025">Alternative splicing</keyword>
<keyword id="KW-1003">Cell membrane</keyword>
<keyword id="KW-1015">Disulfide bond</keyword>
<keyword id="KW-0325">Glycoprotein</keyword>
<keyword id="KW-0472">Membrane</keyword>
<keyword id="KW-0552">Olfaction</keyword>
<keyword id="KW-0675">Receptor</keyword>
<keyword id="KW-1185">Reference proteome</keyword>
<keyword id="KW-0716">Sensory transduction</keyword>
<keyword id="KW-0812">Transmembrane</keyword>
<keyword id="KW-1133">Transmembrane helix</keyword>
<evidence type="ECO:0000250" key="1"/>
<evidence type="ECO:0000250" key="2">
    <source>
        <dbReference type="UniProtKB" id="O02351"/>
    </source>
</evidence>
<evidence type="ECO:0000250" key="3">
    <source>
        <dbReference type="UniProtKB" id="Q9VDD3"/>
    </source>
</evidence>
<evidence type="ECO:0000255" key="4"/>
<evidence type="ECO:0000303" key="5">
    <source>
    </source>
</evidence>
<evidence type="ECO:0000305" key="6"/>
<evidence type="ECO:0000312" key="7">
    <source>
        <dbReference type="EMBL" id="ABX10906.1"/>
    </source>
</evidence>
<evidence type="ECO:0000312" key="8">
    <source>
        <dbReference type="EMBL" id="ACK99697.1"/>
    </source>
</evidence>
<dbReference type="EMBL" id="EU246941">
    <property type="protein sequence ID" value="ABX10906.1"/>
    <property type="molecule type" value="mRNA"/>
</dbReference>
<dbReference type="EMBL" id="FJ387158">
    <property type="protein sequence ID" value="ACK99697.1"/>
    <property type="molecule type" value="Genomic_DNA"/>
</dbReference>
<dbReference type="EMBL" id="CH477338">
    <property type="protein sequence ID" value="EAT43165.2"/>
    <property type="molecule type" value="Genomic_DNA"/>
</dbReference>
<dbReference type="RefSeq" id="XP_001650804.2">
    <property type="nucleotide sequence ID" value="XM_001650754.2"/>
</dbReference>
<dbReference type="SMR" id="Q17A88"/>
<dbReference type="FunCoup" id="Q17A88">
    <property type="interactions" value="1"/>
</dbReference>
<dbReference type="STRING" id="7159.Q17A88"/>
<dbReference type="GlyCosmos" id="Q17A88">
    <property type="glycosylation" value="3 sites, No reported glycans"/>
</dbReference>
<dbReference type="PaxDb" id="7159-AAEL005374-PA"/>
<dbReference type="VEuPathDB" id="VectorBase:AAEL005374"/>
<dbReference type="eggNOG" id="KOG3776">
    <property type="taxonomic scope" value="Eukaryota"/>
</dbReference>
<dbReference type="HOGENOM" id="CLU_019853_1_2_1"/>
<dbReference type="InParanoid" id="Q17A88"/>
<dbReference type="OMA" id="QRKSSYH"/>
<dbReference type="PhylomeDB" id="Q17A88"/>
<dbReference type="Proteomes" id="UP000008820">
    <property type="component" value="Unassembled WGS sequence"/>
</dbReference>
<dbReference type="Proteomes" id="UP000682892">
    <property type="component" value="Chromosome 1"/>
</dbReference>
<dbReference type="GO" id="GO:0005737">
    <property type="term" value="C:cytoplasm"/>
    <property type="evidence" value="ECO:0007669"/>
    <property type="project" value="TreeGrafter"/>
</dbReference>
<dbReference type="GO" id="GO:0005886">
    <property type="term" value="C:plasma membrane"/>
    <property type="evidence" value="ECO:0007669"/>
    <property type="project" value="UniProtKB-SubCell"/>
</dbReference>
<dbReference type="GO" id="GO:0005044">
    <property type="term" value="F:scavenger receptor activity"/>
    <property type="evidence" value="ECO:0007669"/>
    <property type="project" value="TreeGrafter"/>
</dbReference>
<dbReference type="GO" id="GO:0007608">
    <property type="term" value="P:sensory perception of smell"/>
    <property type="evidence" value="ECO:0007669"/>
    <property type="project" value="UniProtKB-KW"/>
</dbReference>
<dbReference type="InterPro" id="IPR002159">
    <property type="entry name" value="CD36_fam"/>
</dbReference>
<dbReference type="PANTHER" id="PTHR11923">
    <property type="entry name" value="SCAVENGER RECEPTOR CLASS B TYPE-1 SR-B1"/>
    <property type="match status" value="1"/>
</dbReference>
<dbReference type="PANTHER" id="PTHR11923:SF69">
    <property type="entry name" value="SENSORY NEURON MEMBRANE PROTEIN 1"/>
    <property type="match status" value="1"/>
</dbReference>
<dbReference type="Pfam" id="PF01130">
    <property type="entry name" value="CD36"/>
    <property type="match status" value="1"/>
</dbReference>
<dbReference type="PRINTS" id="PR01609">
    <property type="entry name" value="CD36FAMILY"/>
</dbReference>